<sequence>MPGIKRILTVTILALCLPSPGNAQAQCTNGFDLDRQSGQCLDIDECRTIPEACRGDMMCVNQNGGYLCIPRTNPVYRGPYSNPYSTPYSGPYPAAAPPLSAPNYPTISRPLICRFGYQMDESNQCVDVDECATDSHQCNPTQICINTEGGYTCSCTDGYWLLEGQCLDIDECRYGYCQQLCANVPGSYSCTCNPGFTLNEDGRSCQDVNECATENPCVQTCVNTYGSFICRCDPGYELEEDGVHCSDMDECSFSEFLCQHECVNQPGTYFCSCPPGYILLDDNRSCQDINECEHRNHTCNLQQTCYNLQGGFKCIDPIRCEEPYLRISDNRCMCPAENPGCRDQPFTILYRDMDVVSGRSVPADIFQMQATTRYPGAYYIFQIKSGNEGREFYMRQTGPISATLVMTRPIKGPREIQLDLEMITVNTVINFRGSSVIRLRIYVSQYPF</sequence>
<keyword id="KW-0913">Age-related macular degeneration</keyword>
<keyword id="KW-0106">Calcium</keyword>
<keyword id="KW-0130">Cell adhesion</keyword>
<keyword id="KW-0144">Charcot-Marie-Tooth disease</keyword>
<keyword id="KW-0225">Disease variant</keyword>
<keyword id="KW-1015">Disulfide bond</keyword>
<keyword id="KW-0245">EGF-like domain</keyword>
<keyword id="KW-0272">Extracellular matrix</keyword>
<keyword id="KW-0325">Glycoprotein</keyword>
<keyword id="KW-0523">Neurodegeneration</keyword>
<keyword id="KW-0622">Neuropathy</keyword>
<keyword id="KW-1267">Proteomics identification</keyword>
<keyword id="KW-1185">Reference proteome</keyword>
<keyword id="KW-0677">Repeat</keyword>
<keyword id="KW-0964">Secreted</keyword>
<keyword id="KW-0732">Signal</keyword>
<protein>
    <recommendedName>
        <fullName>Fibulin-5</fullName>
        <shortName>FIBL-5</shortName>
    </recommendedName>
    <alternativeName>
        <fullName>Developmental arteries and neural crest EGF-like protein</fullName>
        <shortName>Dance</shortName>
    </alternativeName>
    <alternativeName>
        <fullName>Urine p50 protein</fullName>
        <shortName>UP50</shortName>
    </alternativeName>
</protein>
<proteinExistence type="evidence at protein level"/>
<name>FBLN5_HUMAN</name>
<comment type="function">
    <text evidence="1 4 12 13">Essential for elastic fiber formation, is involved in the assembly of continuous elastin (ELN) polymer and promotes the interaction of microfibrils and ELN (PubMed:18185537). Stabilizes and organizes elastic fibers in the skin, lung and vasculature (By similarity). Promotes adhesion of endothelial cells through interaction of integrins and the RGD motif. Vascular ligand for integrin receptors which may play a role in vascular development and remodeling (PubMed:10428823). May act as an adapter that mediates the interaction between FBN1 and ELN (PubMed:17255108).</text>
</comment>
<comment type="subunit">
    <text evidence="1 8 11 12 15 16 17">Homodimer (PubMed:20007835). Monomer (PubMed:15790312, PubMed:19617354), homodimerizes in presence of Ca(2+) (PubMed:19617354). Interacts with ELN (PubMed:15790312, PubMed:17035250). Interacts (via N-terminus) with the integrins ITGAV/ITGB3, ITGAV/ITGB5 and ITGA9/ITGB1 (By similarity). Interacts with FBN1 (via N-terminal domain). Forms a ternary complex with ELN and FBN1 (PubMed:17255108). Interacts with EFEMP2 with moderate affinity (PubMed:19570982). Interacts with LOXL1 (By similarity).</text>
</comment>
<comment type="interaction">
    <interactant intactId="EBI-947897">
        <id>Q9UBX5</id>
    </interactant>
    <interactant intactId="EBI-743414">
        <id>O95967</id>
        <label>EFEMP2</label>
    </interactant>
    <organismsDiffer>false</organismsDiffer>
    <experiments>3</experiments>
</comment>
<comment type="interaction">
    <interactant intactId="EBI-947897">
        <id>Q9UBX5</id>
    </interactant>
    <interactant intactId="EBI-1222108">
        <id>P15502</id>
        <label>ELN</label>
    </interactant>
    <organismsDiffer>false</organismsDiffer>
    <experiments>3</experiments>
</comment>
<comment type="interaction">
    <interactant intactId="EBI-947897">
        <id>Q9UBX5</id>
    </interactant>
    <interactant intactId="EBI-2505934">
        <id>P35555</id>
        <label>FBN1</label>
    </interactant>
    <organismsDiffer>false</organismsDiffer>
    <experiments>3</experiments>
</comment>
<comment type="interaction">
    <interactant intactId="EBI-947897">
        <id>Q9UBX5</id>
    </interactant>
    <interactant intactId="EBI-348399">
        <id>P22607</id>
        <label>FGFR3</label>
    </interactant>
    <organismsDiffer>false</organismsDiffer>
    <experiments>3</experiments>
</comment>
<comment type="interaction">
    <interactant intactId="EBI-947897">
        <id>Q9UBX5</id>
    </interactant>
    <interactant intactId="EBI-747754">
        <id>P28799</id>
        <label>GRN</label>
    </interactant>
    <organismsDiffer>false</organismsDiffer>
    <experiments>3</experiments>
</comment>
<comment type="interaction">
    <interactant intactId="EBI-947897">
        <id>Q9UBX5</id>
    </interactant>
    <interactant intactId="EBI-3893481">
        <id>P28300</id>
        <label>LOX</label>
    </interactant>
    <organismsDiffer>false</organismsDiffer>
    <experiments>2</experiments>
</comment>
<comment type="interaction">
    <interactant intactId="EBI-947897">
        <id>Q9UBX5</id>
    </interactant>
    <interactant intactId="EBI-1546118">
        <id>Q14767</id>
        <label>LTBP2</label>
    </interactant>
    <organismsDiffer>false</organismsDiffer>
    <experiments>2</experiments>
</comment>
<comment type="interaction">
    <interactant intactId="EBI-947897">
        <id>Q9UBX5</id>
    </interactant>
    <interactant intactId="EBI-748397">
        <id>P50222</id>
        <label>MEOX2</label>
    </interactant>
    <organismsDiffer>false</organismsDiffer>
    <experiments>3</experiments>
</comment>
<comment type="interaction">
    <interactant intactId="EBI-947897">
        <id>Q9UBX5</id>
    </interactant>
    <interactant intactId="EBI-1210753">
        <id>Q7Z417</id>
        <label>NUFIP2</label>
    </interactant>
    <organismsDiffer>false</organismsDiffer>
    <experiments>5</experiments>
</comment>
<comment type="interaction">
    <interactant intactId="EBI-947897">
        <id>Q9UBX5</id>
    </interactant>
    <interactant intactId="EBI-740446">
        <id>P32242</id>
        <label>OTX1</label>
    </interactant>
    <organismsDiffer>false</organismsDiffer>
    <experiments>3</experiments>
</comment>
<comment type="interaction">
    <interactant intactId="EBI-947897">
        <id>Q9UBX5</id>
    </interactant>
    <interactant intactId="EBI-5235340">
        <id>Q7Z699</id>
        <label>SPRED1</label>
    </interactant>
    <organismsDiffer>false</organismsDiffer>
    <experiments>3</experiments>
</comment>
<comment type="interaction">
    <interactant intactId="EBI-947897">
        <id>Q9UBX5</id>
    </interactant>
    <interactant intactId="EBI-358993">
        <id>Q15645</id>
        <label>TRIP13</label>
    </interactant>
    <organismsDiffer>false</organismsDiffer>
    <experiments>3</experiments>
</comment>
<comment type="interaction">
    <interactant intactId="EBI-947897">
        <id>Q9UBX5</id>
    </interactant>
    <interactant intactId="EBI-720609">
        <id>O76024</id>
        <label>WFS1</label>
    </interactant>
    <organismsDiffer>false</organismsDiffer>
    <experiments>3</experiments>
</comment>
<comment type="subcellular location">
    <subcellularLocation>
        <location evidence="9 11 18">Secreted</location>
    </subcellularLocation>
    <subcellularLocation>
        <location evidence="11">Secreted</location>
        <location evidence="11">Extracellular space</location>
        <location evidence="11">Extracellular matrix</location>
    </subcellularLocation>
    <text evidence="11">co-localizes with ELN in elastic fibers.</text>
</comment>
<comment type="tissue specificity">
    <text evidence="4 11">Expressed in skin fibroblasts (at protein level) (PubMed:17035250). Expressed predominantly in heart, ovary, and colon but also in kidney, pancreas, testis, lung and placenta. Not detectable in brain, liver, thymus, prostate, or peripheral blood leukocytes (PubMed:10428823).</text>
</comment>
<comment type="PTM">
    <text evidence="8 16">N-glycosylated.</text>
</comment>
<comment type="disease" evidence="19 20">
    <disease id="DI-06336">
        <name>Charcot-Marie-Tooth disease, demyelinating, type 1H</name>
        <acronym>CMT1H</acronym>
        <description>An autosomal dominant demyelinating form of Charcot-Marie-Tooth disease, a disorder of the peripheral nervous system, characterized by progressive weakness and atrophy, initially of the peroneal muscles and later of the distal muscles of the arms. Charcot-Marie-Tooth disease is classified in two main groups on the basis of electrophysiologic properties and histopathology: primary peripheral demyelinating neuropathies (designated CMT1 when they are dominantly inherited) and primary peripheral axonal neuropathies (CMT2). Demyelinating neuropathies are characterized by severely reduced nerve conduction velocities (less than 38 m/sec), segmental demyelination and remyelination with onion bulb formations on nerve biopsy, slowly progressive distal muscle atrophy and weakness, absent deep tendon reflexes, and hollow feet. CMT1H is characterized by peripheral sensorimotor neuropathy with onset usually in adulthood. Affected individuals present with foot deformities, upper or lower limb sensory disturbances, and motor deficits, mainly impaired gait. Rare patients may have hyperelastic skin or develop age-related macular degeneration.</description>
        <dbReference type="MIM" id="619764"/>
    </disease>
    <text>The disease is caused by variants affecting the gene represented in this entry.</text>
</comment>
<comment type="disease" evidence="6">
    <disease id="DI-03317">
        <name>Cutis laxa, autosomal dominant, 2</name>
        <acronym>ADCL2</acronym>
        <description>A connective tissue disorder characterized by loose, hyperextensible skin with decreased resilience and elasticity leading to a premature aged appearance. Face, hands, feet, joints, and torso may be differentially affected. Additional variable clinical features are gastrointestinal diverticula, hernia, and genital prolapse. Rare manifestations are pulmonary artery stenosis, aortic aneurysm, bronchiectasis, and emphysema.</description>
        <dbReference type="MIM" id="614434"/>
    </disease>
    <text>The disease is caused by variants affecting the gene represented in this entry.</text>
</comment>
<comment type="disease" evidence="5 9 10 11 13 17 18">
    <disease id="DI-01236">
        <name>Cutis laxa, autosomal recessive, 1A</name>
        <acronym>ARCL1A</acronym>
        <description>A connective tissue disorder characterized by loose, hyperextensible skin with decreased resilience and elasticity leading to a premature aged appearance. Face, hands, feet, joints, and torso may be differentially affected. The clinical spectrum of autosomal recessive cutis laxa is highly heterogeneous with respect to organ involvement and severity. Type I autosomal recessive cutis laxa is a specific, life-threatening disorder with organ involvement, lung atelectasis and emphysema, diverticula of the gastrointestinal and genitourinary systems, and vascular anomalies. Associated cranial anomalies, late closure of the fontanel, joint laxity, hip dislocation, and inguinal hernia have been observed but are uncommon.</description>
        <dbReference type="MIM" id="219100"/>
    </disease>
    <text evidence="14">The disease is caused by variants affecting the gene represented in this entry. Mutations affecting this gene can modify the phenotype of diseases caused by ELN mutations.</text>
</comment>
<comment type="disease" evidence="7 9 17 18">
    <disease id="DI-00057">
        <name>Macular degeneration, age-related, 3</name>
        <acronym>ARMD3</acronym>
        <description>A form of age-related macular degeneration, a multifactorial eye disease and the most common cause of irreversible vision loss in the developed world. In most patients, the disease is manifest as ophthalmoscopically visible yellowish accumulations of protein and lipid that lie beneath the retinal pigment epithelium and within an elastin-containing structure known as Bruch membrane.</description>
        <dbReference type="MIM" id="608895"/>
    </disease>
    <text>Disease susceptibility is associated with variants affecting the gene represented in this entry.</text>
</comment>
<comment type="similarity">
    <text evidence="21">Belongs to the fibulin family.</text>
</comment>
<gene>
    <name type="primary">FBLN5</name>
    <name type="synonym">DANCE</name>
    <name type="ORF">UNQ184/PRO210</name>
</gene>
<evidence type="ECO:0000250" key="1">
    <source>
        <dbReference type="UniProtKB" id="Q9WVH9"/>
    </source>
</evidence>
<evidence type="ECO:0000255" key="2"/>
<evidence type="ECO:0000255" key="3">
    <source>
        <dbReference type="PROSITE-ProRule" id="PRU00076"/>
    </source>
</evidence>
<evidence type="ECO:0000269" key="4">
    <source>
    </source>
</evidence>
<evidence type="ECO:0000269" key="5">
    <source>
    </source>
</evidence>
<evidence type="ECO:0000269" key="6">
    <source>
    </source>
</evidence>
<evidence type="ECO:0000269" key="7">
    <source>
    </source>
</evidence>
<evidence type="ECO:0000269" key="8">
    <source>
    </source>
</evidence>
<evidence type="ECO:0000269" key="9">
    <source>
    </source>
</evidence>
<evidence type="ECO:0000269" key="10">
    <source>
    </source>
</evidence>
<evidence type="ECO:0000269" key="11">
    <source>
    </source>
</evidence>
<evidence type="ECO:0000269" key="12">
    <source>
    </source>
</evidence>
<evidence type="ECO:0000269" key="13">
    <source>
    </source>
</evidence>
<evidence type="ECO:0000269" key="14">
    <source>
    </source>
</evidence>
<evidence type="ECO:0000269" key="15">
    <source>
    </source>
</evidence>
<evidence type="ECO:0000269" key="16">
    <source>
    </source>
</evidence>
<evidence type="ECO:0000269" key="17">
    <source>
    </source>
</evidence>
<evidence type="ECO:0000269" key="18">
    <source>
    </source>
</evidence>
<evidence type="ECO:0000269" key="19">
    <source>
    </source>
</evidence>
<evidence type="ECO:0000269" key="20">
    <source>
    </source>
</evidence>
<evidence type="ECO:0000305" key="21"/>
<dbReference type="EMBL" id="AJ133490">
    <property type="protein sequence ID" value="CAB38568.1"/>
    <property type="molecule type" value="mRNA"/>
</dbReference>
<dbReference type="EMBL" id="AF112152">
    <property type="protein sequence ID" value="AAD41768.1"/>
    <property type="molecule type" value="mRNA"/>
</dbReference>
<dbReference type="EMBL" id="AF093118">
    <property type="protein sequence ID" value="AAC62107.1"/>
    <property type="molecule type" value="mRNA"/>
</dbReference>
<dbReference type="EMBL" id="AY358898">
    <property type="protein sequence ID" value="AAQ89257.1"/>
    <property type="molecule type" value="mRNA"/>
</dbReference>
<dbReference type="EMBL" id="CR457140">
    <property type="protein sequence ID" value="CAG33421.1"/>
    <property type="molecule type" value="mRNA"/>
</dbReference>
<dbReference type="EMBL" id="AK075147">
    <property type="protein sequence ID" value="BAG52073.1"/>
    <property type="molecule type" value="mRNA"/>
</dbReference>
<dbReference type="EMBL" id="CH471061">
    <property type="protein sequence ID" value="EAW81466.1"/>
    <property type="molecule type" value="Genomic_DNA"/>
</dbReference>
<dbReference type="EMBL" id="BC022280">
    <property type="protein sequence ID" value="AAH22280.1"/>
    <property type="molecule type" value="mRNA"/>
</dbReference>
<dbReference type="CCDS" id="CCDS9898.1"/>
<dbReference type="RefSeq" id="NP_006320.2">
    <property type="nucleotide sequence ID" value="NM_006329.3"/>
</dbReference>
<dbReference type="BioGRID" id="115771">
    <property type="interactions" value="158"/>
</dbReference>
<dbReference type="CORUM" id="Q9UBX5"/>
<dbReference type="DIP" id="DIP-44301N"/>
<dbReference type="FunCoup" id="Q9UBX5">
    <property type="interactions" value="181"/>
</dbReference>
<dbReference type="IntAct" id="Q9UBX5">
    <property type="interactions" value="172"/>
</dbReference>
<dbReference type="MINT" id="Q9UBX5"/>
<dbReference type="STRING" id="9606.ENSP00000345008"/>
<dbReference type="GlyConnect" id="1245">
    <property type="glycosylation" value="6 N-Linked glycans (1 site)"/>
</dbReference>
<dbReference type="GlyCosmos" id="Q9UBX5">
    <property type="glycosylation" value="4 sites, 7 glycans"/>
</dbReference>
<dbReference type="GlyGen" id="Q9UBX5">
    <property type="glycosylation" value="6 sites, 78 N-linked glycans (1 site), 4 O-linked glycans (3 sites)"/>
</dbReference>
<dbReference type="iPTMnet" id="Q9UBX5"/>
<dbReference type="PhosphoSitePlus" id="Q9UBX5"/>
<dbReference type="BioMuta" id="FBLN5"/>
<dbReference type="DMDM" id="12643876"/>
<dbReference type="REPRODUCTION-2DPAGE" id="IPI00294615"/>
<dbReference type="CPTAC" id="CPTAC-2212"/>
<dbReference type="jPOST" id="Q9UBX5"/>
<dbReference type="MassIVE" id="Q9UBX5"/>
<dbReference type="PaxDb" id="9606-ENSP00000345008"/>
<dbReference type="PeptideAtlas" id="Q9UBX5"/>
<dbReference type="ProteomicsDB" id="84093"/>
<dbReference type="Pumba" id="Q9UBX5"/>
<dbReference type="Antibodypedia" id="72">
    <property type="antibodies" value="445 antibodies from 37 providers"/>
</dbReference>
<dbReference type="DNASU" id="10516"/>
<dbReference type="Ensembl" id="ENST00000342058.9">
    <property type="protein sequence ID" value="ENSP00000345008.4"/>
    <property type="gene ID" value="ENSG00000140092.16"/>
</dbReference>
<dbReference type="GeneID" id="10516"/>
<dbReference type="KEGG" id="hsa:10516"/>
<dbReference type="MANE-Select" id="ENST00000342058.9">
    <property type="protein sequence ID" value="ENSP00000345008.4"/>
    <property type="RefSeq nucleotide sequence ID" value="NM_006329.4"/>
    <property type="RefSeq protein sequence ID" value="NP_006320.2"/>
</dbReference>
<dbReference type="UCSC" id="uc001xzx.5">
    <property type="organism name" value="human"/>
</dbReference>
<dbReference type="AGR" id="HGNC:3602"/>
<dbReference type="CTD" id="10516"/>
<dbReference type="DisGeNET" id="10516"/>
<dbReference type="GeneCards" id="FBLN5"/>
<dbReference type="GeneReviews" id="FBLN5"/>
<dbReference type="HGNC" id="HGNC:3602">
    <property type="gene designation" value="FBLN5"/>
</dbReference>
<dbReference type="HPA" id="ENSG00000140092">
    <property type="expression patterns" value="Low tissue specificity"/>
</dbReference>
<dbReference type="MalaCards" id="FBLN5"/>
<dbReference type="MIM" id="219100">
    <property type="type" value="phenotype"/>
</dbReference>
<dbReference type="MIM" id="604580">
    <property type="type" value="gene"/>
</dbReference>
<dbReference type="MIM" id="608895">
    <property type="type" value="phenotype"/>
</dbReference>
<dbReference type="MIM" id="614434">
    <property type="type" value="phenotype"/>
</dbReference>
<dbReference type="MIM" id="619764">
    <property type="type" value="phenotype"/>
</dbReference>
<dbReference type="neXtProt" id="NX_Q9UBX5"/>
<dbReference type="OpenTargets" id="ENSG00000140092"/>
<dbReference type="Orphanet" id="90348">
    <property type="disease" value="Autosomal dominant cutis laxa"/>
</dbReference>
<dbReference type="Orphanet" id="90349">
    <property type="disease" value="Autosomal recessive cutis laxa type 1"/>
</dbReference>
<dbReference type="Orphanet" id="280598">
    <property type="disease" value="Hereditary sensorimotor neuropathy with hyperelastic skin"/>
</dbReference>
<dbReference type="PharmGKB" id="PA28015"/>
<dbReference type="VEuPathDB" id="HostDB:ENSG00000140092"/>
<dbReference type="eggNOG" id="KOG1217">
    <property type="taxonomic scope" value="Eukaryota"/>
</dbReference>
<dbReference type="GeneTree" id="ENSGT00940000158774"/>
<dbReference type="HOGENOM" id="CLU_004826_0_1_1"/>
<dbReference type="InParanoid" id="Q9UBX5"/>
<dbReference type="OMA" id="LICRFGF"/>
<dbReference type="OrthoDB" id="4062651at2759"/>
<dbReference type="PAN-GO" id="Q9UBX5">
    <property type="GO annotations" value="1 GO annotation based on evolutionary models"/>
</dbReference>
<dbReference type="PhylomeDB" id="Q9UBX5"/>
<dbReference type="TreeFam" id="TF317514"/>
<dbReference type="PathwayCommons" id="Q9UBX5"/>
<dbReference type="Reactome" id="R-HSA-1566948">
    <property type="pathway name" value="Elastic fibre formation"/>
</dbReference>
<dbReference type="Reactome" id="R-HSA-2129379">
    <property type="pathway name" value="Molecules associated with elastic fibres"/>
</dbReference>
<dbReference type="SignaLink" id="Q9UBX5"/>
<dbReference type="SIGNOR" id="Q9UBX5"/>
<dbReference type="BioGRID-ORCS" id="10516">
    <property type="hits" value="11 hits in 1161 CRISPR screens"/>
</dbReference>
<dbReference type="ChiTaRS" id="FBLN5">
    <property type="organism name" value="human"/>
</dbReference>
<dbReference type="GeneWiki" id="FBLN5"/>
<dbReference type="GenomeRNAi" id="10516"/>
<dbReference type="Pharos" id="Q9UBX5">
    <property type="development level" value="Tbio"/>
</dbReference>
<dbReference type="PRO" id="PR:Q9UBX5"/>
<dbReference type="Proteomes" id="UP000005640">
    <property type="component" value="Chromosome 14"/>
</dbReference>
<dbReference type="RNAct" id="Q9UBX5">
    <property type="molecule type" value="protein"/>
</dbReference>
<dbReference type="Bgee" id="ENSG00000140092">
    <property type="expression patterns" value="Expressed in thoracic aorta and 175 other cell types or tissues"/>
</dbReference>
<dbReference type="ExpressionAtlas" id="Q9UBX5">
    <property type="expression patterns" value="baseline and differential"/>
</dbReference>
<dbReference type="GO" id="GO:0062023">
    <property type="term" value="C:collagen-containing extracellular matrix"/>
    <property type="evidence" value="ECO:0000314"/>
    <property type="project" value="UniProtKB"/>
</dbReference>
<dbReference type="GO" id="GO:0071953">
    <property type="term" value="C:elastic fiber"/>
    <property type="evidence" value="ECO:0007669"/>
    <property type="project" value="Ensembl"/>
</dbReference>
<dbReference type="GO" id="GO:0070062">
    <property type="term" value="C:extracellular exosome"/>
    <property type="evidence" value="ECO:0007005"/>
    <property type="project" value="UniProtKB"/>
</dbReference>
<dbReference type="GO" id="GO:0031012">
    <property type="term" value="C:extracellular matrix"/>
    <property type="evidence" value="ECO:0000304"/>
    <property type="project" value="ProtInc"/>
</dbReference>
<dbReference type="GO" id="GO:0005576">
    <property type="term" value="C:extracellular region"/>
    <property type="evidence" value="ECO:0007005"/>
    <property type="project" value="BHF-UCL"/>
</dbReference>
<dbReference type="GO" id="GO:0005615">
    <property type="term" value="C:extracellular space"/>
    <property type="evidence" value="ECO:0007005"/>
    <property type="project" value="BHF-UCL"/>
</dbReference>
<dbReference type="GO" id="GO:0005509">
    <property type="term" value="F:calcium ion binding"/>
    <property type="evidence" value="ECO:0007669"/>
    <property type="project" value="InterPro"/>
</dbReference>
<dbReference type="GO" id="GO:0005178">
    <property type="term" value="F:integrin binding"/>
    <property type="evidence" value="ECO:0000250"/>
    <property type="project" value="UniProtKB"/>
</dbReference>
<dbReference type="GO" id="GO:0042803">
    <property type="term" value="F:protein homodimerization activity"/>
    <property type="evidence" value="ECO:0000314"/>
    <property type="project" value="UniProtKB"/>
</dbReference>
<dbReference type="GO" id="GO:0007160">
    <property type="term" value="P:cell-matrix adhesion"/>
    <property type="evidence" value="ECO:0000304"/>
    <property type="project" value="ProtInc"/>
</dbReference>
<dbReference type="GO" id="GO:0048251">
    <property type="term" value="P:elastic fiber assembly"/>
    <property type="evidence" value="ECO:0000315"/>
    <property type="project" value="UniProtKB"/>
</dbReference>
<dbReference type="GO" id="GO:0098867">
    <property type="term" value="P:intramembranous bone growth"/>
    <property type="evidence" value="ECO:0007669"/>
    <property type="project" value="Ensembl"/>
</dbReference>
<dbReference type="GO" id="GO:0016525">
    <property type="term" value="P:negative regulation of angiogenesis"/>
    <property type="evidence" value="ECO:0007669"/>
    <property type="project" value="Ensembl"/>
</dbReference>
<dbReference type="GO" id="GO:0000122">
    <property type="term" value="P:negative regulation of transcription by RNA polymerase II"/>
    <property type="evidence" value="ECO:0007669"/>
    <property type="project" value="Ensembl"/>
</dbReference>
<dbReference type="GO" id="GO:0033690">
    <property type="term" value="P:positive regulation of osteoblast proliferation"/>
    <property type="evidence" value="ECO:0007669"/>
    <property type="project" value="Ensembl"/>
</dbReference>
<dbReference type="GO" id="GO:0045944">
    <property type="term" value="P:positive regulation of transcription by RNA polymerase II"/>
    <property type="evidence" value="ECO:0007669"/>
    <property type="project" value="Ensembl"/>
</dbReference>
<dbReference type="GO" id="GO:0034394">
    <property type="term" value="P:protein localization to cell surface"/>
    <property type="evidence" value="ECO:0000250"/>
    <property type="project" value="BHF-UCL"/>
</dbReference>
<dbReference type="GO" id="GO:2000121">
    <property type="term" value="P:regulation of removal of superoxide radicals"/>
    <property type="evidence" value="ECO:0000250"/>
    <property type="project" value="BHF-UCL"/>
</dbReference>
<dbReference type="GO" id="GO:0046903">
    <property type="term" value="P:secretion"/>
    <property type="evidence" value="ECO:0000314"/>
    <property type="project" value="UniProtKB"/>
</dbReference>
<dbReference type="CDD" id="cd00054">
    <property type="entry name" value="EGF_CA"/>
    <property type="match status" value="1"/>
</dbReference>
<dbReference type="FunFam" id="2.10.25.10:FF:000367">
    <property type="entry name" value="EGF-containing fibulin-like extracellular matrix protein 2"/>
    <property type="match status" value="1"/>
</dbReference>
<dbReference type="FunFam" id="2.10.25.10:FF:000091">
    <property type="entry name" value="Fibulin 5"/>
    <property type="match status" value="2"/>
</dbReference>
<dbReference type="FunFam" id="2.10.25.10:FF:000487">
    <property type="entry name" value="Fibulin 5"/>
    <property type="match status" value="1"/>
</dbReference>
<dbReference type="FunFam" id="2.10.25.10:FF:000190">
    <property type="entry name" value="fibulin-5 isoform X2"/>
    <property type="match status" value="1"/>
</dbReference>
<dbReference type="Gene3D" id="2.10.25.10">
    <property type="entry name" value="Laminin"/>
    <property type="match status" value="7"/>
</dbReference>
<dbReference type="InterPro" id="IPR026823">
    <property type="entry name" value="cEGF"/>
</dbReference>
<dbReference type="InterPro" id="IPR001881">
    <property type="entry name" value="EGF-like_Ca-bd_dom"/>
</dbReference>
<dbReference type="InterPro" id="IPR000742">
    <property type="entry name" value="EGF-like_dom"/>
</dbReference>
<dbReference type="InterPro" id="IPR000152">
    <property type="entry name" value="EGF-type_Asp/Asn_hydroxyl_site"/>
</dbReference>
<dbReference type="InterPro" id="IPR018097">
    <property type="entry name" value="EGF_Ca-bd_CS"/>
</dbReference>
<dbReference type="InterPro" id="IPR055088">
    <property type="entry name" value="Fibulin_C"/>
</dbReference>
<dbReference type="InterPro" id="IPR009030">
    <property type="entry name" value="Growth_fac_rcpt_cys_sf"/>
</dbReference>
<dbReference type="InterPro" id="IPR052235">
    <property type="entry name" value="Nephronectin_domain"/>
</dbReference>
<dbReference type="InterPro" id="IPR049883">
    <property type="entry name" value="NOTCH1_EGF-like"/>
</dbReference>
<dbReference type="PANTHER" id="PTHR24050">
    <property type="entry name" value="PA14 DOMAIN-CONTAINING PROTEIN"/>
    <property type="match status" value="1"/>
</dbReference>
<dbReference type="PANTHER" id="PTHR24050:SF28">
    <property type="entry name" value="UROMODULIN-LIKE"/>
    <property type="match status" value="1"/>
</dbReference>
<dbReference type="Pfam" id="PF12662">
    <property type="entry name" value="cEGF"/>
    <property type="match status" value="3"/>
</dbReference>
<dbReference type="Pfam" id="PF07645">
    <property type="entry name" value="EGF_CA"/>
    <property type="match status" value="2"/>
</dbReference>
<dbReference type="Pfam" id="PF22914">
    <property type="entry name" value="Fibulin_C"/>
    <property type="match status" value="1"/>
</dbReference>
<dbReference type="SMART" id="SM00181">
    <property type="entry name" value="EGF"/>
    <property type="match status" value="5"/>
</dbReference>
<dbReference type="SMART" id="SM00179">
    <property type="entry name" value="EGF_CA"/>
    <property type="match status" value="6"/>
</dbReference>
<dbReference type="SUPFAM" id="SSF57196">
    <property type="entry name" value="EGF/Laminin"/>
    <property type="match status" value="1"/>
</dbReference>
<dbReference type="SUPFAM" id="SSF57184">
    <property type="entry name" value="Growth factor receptor domain"/>
    <property type="match status" value="2"/>
</dbReference>
<dbReference type="PROSITE" id="PS00010">
    <property type="entry name" value="ASX_HYDROXYL"/>
    <property type="match status" value="4"/>
</dbReference>
<dbReference type="PROSITE" id="PS01186">
    <property type="entry name" value="EGF_2"/>
    <property type="match status" value="4"/>
</dbReference>
<dbReference type="PROSITE" id="PS50026">
    <property type="entry name" value="EGF_3"/>
    <property type="match status" value="5"/>
</dbReference>
<dbReference type="PROSITE" id="PS01187">
    <property type="entry name" value="EGF_CA"/>
    <property type="match status" value="6"/>
</dbReference>
<feature type="signal peptide" evidence="2">
    <location>
        <begin position="1"/>
        <end position="23"/>
    </location>
</feature>
<feature type="chain" id="PRO_0000007577" description="Fibulin-5">
    <location>
        <begin position="24"/>
        <end position="448"/>
    </location>
</feature>
<feature type="domain" description="EGF-like 1; calcium-binding" evidence="3">
    <location>
        <begin position="42"/>
        <end position="82"/>
    </location>
</feature>
<feature type="domain" description="EGF-like 2; calcium-binding" evidence="3">
    <location>
        <begin position="127"/>
        <end position="167"/>
    </location>
</feature>
<feature type="domain" description="EGF-like 3; calcium-binding" evidence="3">
    <location>
        <begin position="168"/>
        <end position="206"/>
    </location>
</feature>
<feature type="domain" description="EGF-like 4; calcium-binding" evidence="3">
    <location>
        <begin position="207"/>
        <end position="246"/>
    </location>
</feature>
<feature type="domain" description="EGF-like 5; calcium-binding" evidence="3">
    <location>
        <begin position="247"/>
        <end position="287"/>
    </location>
</feature>
<feature type="domain" description="EGF-like 6; calcium-binding" evidence="3">
    <location>
        <begin position="288"/>
        <end position="333"/>
    </location>
</feature>
<feature type="region of interest" description="Interaction with LOXL1" evidence="1">
    <location>
        <begin position="245"/>
        <end position="448"/>
    </location>
</feature>
<feature type="short sequence motif" description="Cell attachment site" evidence="2">
    <location>
        <begin position="54"/>
        <end position="56"/>
    </location>
</feature>
<feature type="glycosylation site" description="N-linked (GlcNAc...) asparagine" evidence="2">
    <location>
        <position position="283"/>
    </location>
</feature>
<feature type="glycosylation site" description="N-linked (GlcNAc...) asparagine" evidence="2">
    <location>
        <position position="296"/>
    </location>
</feature>
<feature type="disulfide bond" evidence="3">
    <location>
        <begin position="46"/>
        <end position="59"/>
    </location>
</feature>
<feature type="disulfide bond" evidence="3">
    <location>
        <begin position="53"/>
        <end position="68"/>
    </location>
</feature>
<feature type="disulfide bond" evidence="3">
    <location>
        <begin position="131"/>
        <end position="144"/>
    </location>
</feature>
<feature type="disulfide bond" evidence="3">
    <location>
        <begin position="138"/>
        <end position="153"/>
    </location>
</feature>
<feature type="disulfide bond" evidence="3">
    <location>
        <begin position="155"/>
        <end position="166"/>
    </location>
</feature>
<feature type="disulfide bond" evidence="3">
    <location>
        <begin position="172"/>
        <end position="181"/>
    </location>
</feature>
<feature type="disulfide bond" evidence="3">
    <location>
        <begin position="177"/>
        <end position="190"/>
    </location>
</feature>
<feature type="disulfide bond" evidence="3">
    <location>
        <begin position="192"/>
        <end position="205"/>
    </location>
</feature>
<feature type="disulfide bond" evidence="3">
    <location>
        <begin position="211"/>
        <end position="221"/>
    </location>
</feature>
<feature type="disulfide bond" evidence="3">
    <location>
        <begin position="217"/>
        <end position="230"/>
    </location>
</feature>
<feature type="disulfide bond" evidence="3">
    <location>
        <begin position="232"/>
        <end position="245"/>
    </location>
</feature>
<feature type="disulfide bond" evidence="3">
    <location>
        <begin position="251"/>
        <end position="262"/>
    </location>
</feature>
<feature type="disulfide bond" evidence="3">
    <location>
        <begin position="258"/>
        <end position="271"/>
    </location>
</feature>
<feature type="disulfide bond" evidence="3">
    <location>
        <begin position="273"/>
        <end position="286"/>
    </location>
</feature>
<feature type="disulfide bond" evidence="3">
    <location>
        <begin position="292"/>
        <end position="305"/>
    </location>
</feature>
<feature type="disulfide bond" evidence="3">
    <location>
        <begin position="299"/>
        <end position="314"/>
    </location>
</feature>
<feature type="disulfide bond" evidence="3">
    <location>
        <begin position="320"/>
        <end position="332"/>
    </location>
</feature>
<feature type="sequence variant" id="VAR_076289" description="In CMT1H; dbSNP:rs141200859." evidence="19">
    <original>T</original>
    <variation>I</variation>
    <location>
        <position position="48"/>
    </location>
</feature>
<feature type="sequence variant" id="VAR_019814" description="In ARMD3; no effect on secretion; no effect on homodimerization; dbSNP:rs121434299." evidence="7 9 17">
    <original>V</original>
    <variation>L</variation>
    <location>
        <position position="60"/>
    </location>
</feature>
<feature type="sequence variant" id="VAR_019815" description="In ARMD3; no effect on secretion; no effect on homodimerization; dbSNP:rs121434300." evidence="7 9 17">
    <original>R</original>
    <variation>Q</variation>
    <location>
        <position position="71"/>
    </location>
</feature>
<feature type="sequence variant" id="VAR_019816" description="In ARMD3; no effect on secretion; slightly increases homodimerization in absence of Ca(2+); dbSNP:rs121434301." evidence="7 9 17">
    <original>P</original>
    <variation>S</variation>
    <location>
        <position position="87"/>
    </location>
</feature>
<feature type="sequence variant" id="VAR_076290" description="In CMT1H; dbSNP:rs144288844." evidence="19">
    <original>G</original>
    <variation>S</variation>
    <location>
        <position position="90"/>
    </location>
</feature>
<feature type="sequence variant" id="VAR_072389" description="In ARMD3; almost abolishes secretion; no effect on homodimerization." evidence="9 17">
    <original>Q</original>
    <variation>P</variation>
    <location>
        <position position="124"/>
    </location>
</feature>
<feature type="sequence variant" id="VAR_072390" description="No effect on secretion; slightly increases homodimerization in absence of Ca(2+); dbSNP:rs61734479." evidence="9 17 19">
    <original>V</original>
    <variation>M</variation>
    <location>
        <position position="126"/>
    </location>
</feature>
<feature type="sequence variant" id="VAR_019817" description="In ARMD3; decreases secretion; slightly increases homodimerization in absence of Ca(2+); no effect on protein folding; dbSNP:rs28939072." evidence="7 9 17 18">
    <original>I</original>
    <variation>T</variation>
    <location>
        <position position="169"/>
    </location>
</feature>
<feature type="sequence variant" id="VAR_072391" description="Slightly increases homodimerization in absence of Ca(2+); no effect on protein folding; no effect on secretion; dbSNP:rs80338765." evidence="9 17 18">
    <original>G</original>
    <variation>R</variation>
    <location>
        <position position="202"/>
    </location>
</feature>
<feature type="sequence variant" id="VAR_072392" description="In ARCL1A; formation of extracellular globular aggregates; decreases cell growth; reduces interaction with ELN; abolishes secretion; increases homodimerization; dbSNP:rs80338766." evidence="9 11 13 17">
    <original>C</original>
    <variation>R</variation>
    <location>
        <position position="217"/>
    </location>
</feature>
<feature type="sequence variant" id="VAR_017153" description="In ARCL1A; decreases expression; produces protein misfolding; abolishes secretion; reduces interaction with ELN; increases homodimerization; impairs elastic fiber development; dbSNP:rs28939370." evidence="5 9 10 11 17 18">
    <original>S</original>
    <variation>P</variation>
    <location>
        <position position="227"/>
    </location>
</feature>
<feature type="sequence variant" id="VAR_072393" description="In ARMD3, ARCL1A and CMT1H; produces protein misolding; decreases secretion; no effect on homodimerization; dbSNP:rs149396611." evidence="9 17 18 19">
    <original>G</original>
    <variation>S</variation>
    <location>
        <position position="267"/>
    </location>
</feature>
<feature type="sequence variant" id="VAR_072394" description="Found in a patient with autosomal recessive cutis laxa also carrying a mutation in ELN; uncertain significance; dbSNP:rs377360782." evidence="14">
    <original>L</original>
    <variation>M</variation>
    <location>
        <position position="301"/>
    </location>
</feature>
<feature type="sequence variant" id="VAR_019818" description="In ARMD3; no effect on secretion; slightly increases homodimerization in absence of Ca(2+); dbSNP:rs28939073." evidence="7 9 17">
    <original>R</original>
    <variation>W</variation>
    <location>
        <position position="351"/>
    </location>
</feature>
<feature type="sequence variant" id="VAR_019819" description="In ARMD3; no effect on secretion; dbSNP:rs121434302." evidence="7 9">
    <original>A</original>
    <variation>T</variation>
    <location>
        <position position="363"/>
    </location>
</feature>
<feature type="sequence variant" id="VAR_026986" description="In dbSNP:rs1802492.">
    <original>D</original>
    <variation>Y</variation>
    <location>
        <position position="364"/>
    </location>
</feature>
<feature type="sequence variant" id="VAR_076291" description="In CMT1H; dbSNP:rs864309526." evidence="19 20">
    <original>R</original>
    <variation>C</variation>
    <location>
        <position position="373"/>
    </location>
</feature>
<feature type="sequence variant" id="VAR_019820" description="In ARMD3; decreases secretion; slightly increases homodimerization in absence of Ca(2+); dbSNP:rs121434303." evidence="7 9 17">
    <original>G</original>
    <variation>E</variation>
    <location>
        <position position="412"/>
    </location>
</feature>
<feature type="sequence conflict" description="In Ref. 3; AAC62107." evidence="21" ref="3">
    <original>IP</original>
    <variation>HS</variation>
    <location>
        <begin position="69"/>
        <end position="70"/>
    </location>
</feature>
<feature type="sequence conflict" description="In Ref. 3; AAC62107." evidence="21" ref="3">
    <original>TE</original>
    <variation>MK</variation>
    <location>
        <begin position="147"/>
        <end position="148"/>
    </location>
</feature>
<feature type="sequence conflict" description="In Ref. 4; AAQ89257." evidence="21" ref="4">
    <original>F</original>
    <variation>L</variation>
    <location>
        <position position="228"/>
    </location>
</feature>
<organism>
    <name type="scientific">Homo sapiens</name>
    <name type="common">Human</name>
    <dbReference type="NCBI Taxonomy" id="9606"/>
    <lineage>
        <taxon>Eukaryota</taxon>
        <taxon>Metazoa</taxon>
        <taxon>Chordata</taxon>
        <taxon>Craniata</taxon>
        <taxon>Vertebrata</taxon>
        <taxon>Euteleostomi</taxon>
        <taxon>Mammalia</taxon>
        <taxon>Eutheria</taxon>
        <taxon>Euarchontoglires</taxon>
        <taxon>Primates</taxon>
        <taxon>Haplorrhini</taxon>
        <taxon>Catarrhini</taxon>
        <taxon>Hominidae</taxon>
        <taxon>Homo</taxon>
    </lineage>
</organism>
<reference key="1">
    <citation type="submission" date="1999-03" db="EMBL/GenBank/DDBJ databases">
        <authorList>
            <person name="Kostka G."/>
        </authorList>
    </citation>
    <scope>NUCLEOTIDE SEQUENCE [MRNA]</scope>
    <source>
        <tissue>Melanoma</tissue>
    </source>
</reference>
<reference key="2">
    <citation type="journal article" date="1999" name="J. Biol. Chem.">
        <title>DANCE, a novel secreted RGD protein expressed in developing, atherosclerotic, and balloon-injured arteries.</title>
        <authorList>
            <person name="Nakamura T."/>
            <person name="Ruiz-Lozano P."/>
            <person name="Lindner V."/>
            <person name="Yabe D."/>
            <person name="Taniwaki M."/>
            <person name="Furukawa Y."/>
            <person name="Kobuke K."/>
            <person name="Tashiro K."/>
            <person name="Lu Z."/>
            <person name="Andon N.L."/>
            <person name="Schaub R."/>
            <person name="Matsumori A."/>
            <person name="Sasayama S."/>
            <person name="Chien K.R."/>
            <person name="Honjo T."/>
        </authorList>
    </citation>
    <scope>NUCLEOTIDE SEQUENCE [MRNA]</scope>
    <scope>FUNCTION</scope>
    <scope>TISSUE SPECIFICITY</scope>
</reference>
<reference key="3">
    <citation type="submission" date="1998-09" db="EMBL/GenBank/DDBJ databases">
        <authorList>
            <person name="Zemel R."/>
            <person name="Sholto O."/>
            <person name="Shaul Y."/>
        </authorList>
    </citation>
    <scope>NUCLEOTIDE SEQUENCE [MRNA]</scope>
    <source>
        <tissue>Urine</tissue>
    </source>
</reference>
<reference key="4">
    <citation type="journal article" date="2003" name="Genome Res.">
        <title>The secreted protein discovery initiative (SPDI), a large-scale effort to identify novel human secreted and transmembrane proteins: a bioinformatics assessment.</title>
        <authorList>
            <person name="Clark H.F."/>
            <person name="Gurney A.L."/>
            <person name="Abaya E."/>
            <person name="Baker K."/>
            <person name="Baldwin D.T."/>
            <person name="Brush J."/>
            <person name="Chen J."/>
            <person name="Chow B."/>
            <person name="Chui C."/>
            <person name="Crowley C."/>
            <person name="Currell B."/>
            <person name="Deuel B."/>
            <person name="Dowd P."/>
            <person name="Eaton D."/>
            <person name="Foster J.S."/>
            <person name="Grimaldi C."/>
            <person name="Gu Q."/>
            <person name="Hass P.E."/>
            <person name="Heldens S."/>
            <person name="Huang A."/>
            <person name="Kim H.S."/>
            <person name="Klimowski L."/>
            <person name="Jin Y."/>
            <person name="Johnson S."/>
            <person name="Lee J."/>
            <person name="Lewis L."/>
            <person name="Liao D."/>
            <person name="Mark M.R."/>
            <person name="Robbie E."/>
            <person name="Sanchez C."/>
            <person name="Schoenfeld J."/>
            <person name="Seshagiri S."/>
            <person name="Simmons L."/>
            <person name="Singh J."/>
            <person name="Smith V."/>
            <person name="Stinson J."/>
            <person name="Vagts A."/>
            <person name="Vandlen R.L."/>
            <person name="Watanabe C."/>
            <person name="Wieand D."/>
            <person name="Woods K."/>
            <person name="Xie M.-H."/>
            <person name="Yansura D.G."/>
            <person name="Yi S."/>
            <person name="Yu G."/>
            <person name="Yuan J."/>
            <person name="Zhang M."/>
            <person name="Zhang Z."/>
            <person name="Goddard A.D."/>
            <person name="Wood W.I."/>
            <person name="Godowski P.J."/>
            <person name="Gray A.M."/>
        </authorList>
    </citation>
    <scope>NUCLEOTIDE SEQUENCE [LARGE SCALE MRNA]</scope>
</reference>
<reference key="5">
    <citation type="submission" date="2004-06" db="EMBL/GenBank/DDBJ databases">
        <title>Cloning of human full open reading frames in Gateway(TM) system entry vector (pDONR201).</title>
        <authorList>
            <person name="Ebert L."/>
            <person name="Schick M."/>
            <person name="Neubert P."/>
            <person name="Schatten R."/>
            <person name="Henze S."/>
            <person name="Korn B."/>
        </authorList>
    </citation>
    <scope>NUCLEOTIDE SEQUENCE [LARGE SCALE MRNA]</scope>
</reference>
<reference key="6">
    <citation type="journal article" date="2005" name="DNA Res.">
        <title>Signal sequence and keyword trap in silico for selection of full-length human cDNAs encoding secretion or membrane proteins from oligo-capped cDNA libraries.</title>
        <authorList>
            <person name="Otsuki T."/>
            <person name="Ota T."/>
            <person name="Nishikawa T."/>
            <person name="Hayashi K."/>
            <person name="Suzuki Y."/>
            <person name="Yamamoto J."/>
            <person name="Wakamatsu A."/>
            <person name="Kimura K."/>
            <person name="Sakamoto K."/>
            <person name="Hatano N."/>
            <person name="Kawai Y."/>
            <person name="Ishii S."/>
            <person name="Saito K."/>
            <person name="Kojima S."/>
            <person name="Sugiyama T."/>
            <person name="Ono T."/>
            <person name="Okano K."/>
            <person name="Yoshikawa Y."/>
            <person name="Aotsuka S."/>
            <person name="Sasaki N."/>
            <person name="Hattori A."/>
            <person name="Okumura K."/>
            <person name="Nagai K."/>
            <person name="Sugano S."/>
            <person name="Isogai T."/>
        </authorList>
    </citation>
    <scope>NUCLEOTIDE SEQUENCE [LARGE SCALE MRNA]</scope>
    <source>
        <tissue>Placenta</tissue>
    </source>
</reference>
<reference key="7">
    <citation type="submission" date="2005-07" db="EMBL/GenBank/DDBJ databases">
        <authorList>
            <person name="Mural R.J."/>
            <person name="Istrail S."/>
            <person name="Sutton G."/>
            <person name="Florea L."/>
            <person name="Halpern A.L."/>
            <person name="Mobarry C.M."/>
            <person name="Lippert R."/>
            <person name="Walenz B."/>
            <person name="Shatkay H."/>
            <person name="Dew I."/>
            <person name="Miller J.R."/>
            <person name="Flanigan M.J."/>
            <person name="Edwards N.J."/>
            <person name="Bolanos R."/>
            <person name="Fasulo D."/>
            <person name="Halldorsson B.V."/>
            <person name="Hannenhalli S."/>
            <person name="Turner R."/>
            <person name="Yooseph S."/>
            <person name="Lu F."/>
            <person name="Nusskern D.R."/>
            <person name="Shue B.C."/>
            <person name="Zheng X.H."/>
            <person name="Zhong F."/>
            <person name="Delcher A.L."/>
            <person name="Huson D.H."/>
            <person name="Kravitz S.A."/>
            <person name="Mouchard L."/>
            <person name="Reinert K."/>
            <person name="Remington K.A."/>
            <person name="Clark A.G."/>
            <person name="Waterman M.S."/>
            <person name="Eichler E.E."/>
            <person name="Adams M.D."/>
            <person name="Hunkapiller M.W."/>
            <person name="Myers E.W."/>
            <person name="Venter J.C."/>
        </authorList>
    </citation>
    <scope>NUCLEOTIDE SEQUENCE [LARGE SCALE GENOMIC DNA]</scope>
</reference>
<reference key="8">
    <citation type="journal article" date="2004" name="Genome Res.">
        <title>The status, quality, and expansion of the NIH full-length cDNA project: the Mammalian Gene Collection (MGC).</title>
        <authorList>
            <consortium name="The MGC Project Team"/>
        </authorList>
    </citation>
    <scope>NUCLEOTIDE SEQUENCE [LARGE SCALE MRNA]</scope>
    <source>
        <tissue>Lung</tissue>
    </source>
</reference>
<reference key="9">
    <citation type="journal article" date="2005" name="Biochem. J.">
        <title>Fibulin-5 interacts with fibrillin-1 molecules and microfibrils.</title>
        <authorList>
            <person name="Freeman L.J."/>
            <person name="Lomas A."/>
            <person name="Hodson N."/>
            <person name="Sherratt M.J."/>
            <person name="Mellody K.T."/>
            <person name="Weiss A.S."/>
            <person name="Shuttleworth A."/>
            <person name="Kielty C.M."/>
        </authorList>
    </citation>
    <scope>INTERACTION WITH FBN1 AND ELN</scope>
    <scope>SUBUNIT</scope>
    <scope>GLYCOSYLATION</scope>
</reference>
<reference key="10">
    <citation type="journal article" date="2007" name="J. Biol. Chem.">
        <title>Fibrillin-1 interactions with fibulins depend on the first hybrid domain and provide an adaptor function to tropoelastin.</title>
        <authorList>
            <person name="El-Hallous E."/>
            <person name="Sasaki T."/>
            <person name="Hubmacher D."/>
            <person name="Getie M."/>
            <person name="Tiedemann K."/>
            <person name="Brinckmann J."/>
            <person name="Baetge B."/>
            <person name="Davis E.C."/>
            <person name="Reinhardt D.P."/>
        </authorList>
    </citation>
    <scope>FUNCTION</scope>
    <scope>INTERACTION WITH FBN1 AND ELN</scope>
</reference>
<reference key="11">
    <citation type="journal article" date="2009" name="J. Biol. Chem.">
        <title>Differential regulation of elastic fiber formation by fibulin-4 and -5.</title>
        <authorList>
            <person name="Choudhury R."/>
            <person name="McGovern A."/>
            <person name="Ridley C."/>
            <person name="Cain S.A."/>
            <person name="Baldwin A."/>
            <person name="Wang M.C."/>
            <person name="Guo C."/>
            <person name="Mironov A. Jr."/>
            <person name="Drymoussi Z."/>
            <person name="Trump D."/>
            <person name="Shuttleworth A."/>
            <person name="Baldock C."/>
            <person name="Kielty C.M."/>
        </authorList>
    </citation>
    <scope>INTERACTION WITH ELN; LOX; FBLN5 AND FBN1EFEMP2</scope>
</reference>
<reference key="12">
    <citation type="journal article" date="2009" name="J. Biol. Chem.">
        <title>Fibulin 5 forms a compact dimer in physiological solutions.</title>
        <authorList>
            <person name="Jones R.P."/>
            <person name="Wang M.C."/>
            <person name="Jowitt T.A."/>
            <person name="Ridley C."/>
            <person name="Mellody K.T."/>
            <person name="Howard M."/>
            <person name="Wang T."/>
            <person name="Bishop P.N."/>
            <person name="Lotery A.J."/>
            <person name="Kielty C.M."/>
            <person name="Baldock C."/>
            <person name="Trump D."/>
        </authorList>
    </citation>
    <scope>SUBUNIT</scope>
    <scope>GLYCOSYLATION</scope>
</reference>
<reference key="13">
    <citation type="journal article" date="2014" name="J. Proteomics">
        <title>An enzyme assisted RP-RPLC approach for in-depth analysis of human liver phosphoproteome.</title>
        <authorList>
            <person name="Bian Y."/>
            <person name="Song C."/>
            <person name="Cheng K."/>
            <person name="Dong M."/>
            <person name="Wang F."/>
            <person name="Huang J."/>
            <person name="Sun D."/>
            <person name="Wang L."/>
            <person name="Ye M."/>
            <person name="Zou H."/>
        </authorList>
    </citation>
    <scope>IDENTIFICATION BY MASS SPECTROMETRY [LARGE SCALE ANALYSIS]</scope>
    <source>
        <tissue>Liver</tissue>
    </source>
</reference>
<reference key="14">
    <citation type="journal article" date="2002" name="Hum. Mol. Genet.">
        <title>Homozygosity for a missense mutation in fibulin-5 (FBLN5) results in a severe form of cutis laxa.</title>
        <authorList>
            <person name="Loeys B."/>
            <person name="van Maldergem L."/>
            <person name="Mortier G."/>
            <person name="Coucke P."/>
            <person name="Gerniers S."/>
            <person name="Naeyaert J.-M."/>
            <person name="de Paepe A."/>
        </authorList>
    </citation>
    <scope>VARIANT ARCL1A PRO-227</scope>
</reference>
<reference key="15">
    <citation type="journal article" date="2003" name="Am. J. Hum. Genet.">
        <title>Genetic heterogeneity of cutis laxa: a heterozygous tandem duplication within the fibulin-5 (FBLN5) gene.</title>
        <authorList>
            <person name="Markova D."/>
            <person name="Zou Y."/>
            <person name="Ringpfeil F."/>
            <person name="Sasaki T."/>
            <person name="Kostka G."/>
            <person name="Timpl R."/>
            <person name="Uitto J."/>
            <person name="Chu M.-L."/>
        </authorList>
    </citation>
    <scope>INVOLVEMENT IN ADCL2</scope>
</reference>
<reference key="16">
    <citation type="journal article" date="2004" name="N. Engl. J. Med.">
        <title>Missense variations in the fibulin 5 gene and age-related macular degeneration.</title>
        <authorList>
            <person name="Stone E.M."/>
            <person name="Braun T.A."/>
            <person name="Russell S.R."/>
            <person name="Kuehn M.H."/>
            <person name="Lotery A.J."/>
            <person name="Moore P.A."/>
            <person name="Eastman C.G."/>
            <person name="Casavant T.L."/>
            <person name="Sheffield V.C."/>
        </authorList>
    </citation>
    <scope>VARIANTS ARMD3 LEU-60; GLN-71; SER-87; THR-169; TRP-351; THR-363 AND GLU-412</scope>
</reference>
<reference key="17">
    <citation type="journal article" date="2006" name="Hum. Mol. Genet.">
        <title>Fibulin-5 mutations: mechanisms of impaired elastic fiber formation in recessive cutis laxa.</title>
        <authorList>
            <person name="Hu Q."/>
            <person name="Loeys B.L."/>
            <person name="Coucke P.J."/>
            <person name="De Paepe A."/>
            <person name="Mecham R.P."/>
            <person name="Choi J."/>
            <person name="Davis E.C."/>
            <person name="Urban Z."/>
        </authorList>
    </citation>
    <scope>VARIANTS ARCL1A ARG-217 AND PRO-227</scope>
    <scope>CHARACTERIZATION OF VARIANTS ARCL1A ARG-217 AND PRO-227</scope>
    <scope>FUNCTION</scope>
    <scope>INTERACTION WITH ELN</scope>
    <scope>SUBCELLULAR LOCATION</scope>
    <scope>TISSUE SPECIFICITY</scope>
</reference>
<reference key="18">
    <citation type="journal article" date="2006" name="Hum. Mutat.">
        <title>Reduced secretion of fibulin 5 in age-related macular degeneration and cutis laxa.</title>
        <authorList>
            <person name="Lotery A.J."/>
            <person name="Baas D."/>
            <person name="Ridley C."/>
            <person name="Jones R.P."/>
            <person name="Klaver C.C."/>
            <person name="Stone E."/>
            <person name="Nakamura T."/>
            <person name="Luff A."/>
            <person name="Griffiths H."/>
            <person name="Wang T."/>
            <person name="Bergen A.A."/>
            <person name="Trump D."/>
        </authorList>
    </citation>
    <scope>VARIANTS ARMD3 LEU-60; GLN-71; SER-87; PRO-124; THR-169; SER-267; TRP-351; THR-363 AND GLU-412</scope>
    <scope>CHARACTERIZATION OF VARIANTS ARMD3 LEU-60; GLN-71; SER-87; PRO-124; THR-169; SER-267; TRP-351; THR-363 AND GLU-412</scope>
    <scope>VARIANTS ARCL1A ARG-217 AND PRO-227</scope>
    <scope>CHARACTERIZATION OF VARIANTS ARCL1A ARG-217 AND PRO-227</scope>
    <scope>VARIANTS MET-126 AND ARG-202</scope>
    <scope>SUBCELLULAR LOCATION</scope>
</reference>
<reference key="19">
    <citation type="journal article" date="2006" name="J. Invest. Dermatol.">
        <title>Homozygous missense mutation in fibulin-5 in an Iranian autosomal recessive cutis laxa pedigree and associated haplotype.</title>
        <authorList>
            <person name="Elahi E."/>
            <person name="Kalhor R."/>
            <person name="Banihosseini S.S."/>
            <person name="Torabi N."/>
            <person name="Pour-Jafari H."/>
            <person name="Houshmand M."/>
            <person name="Amini S.S.H."/>
            <person name="Ramezani A."/>
            <person name="Loeys B."/>
        </authorList>
    </citation>
    <scope>VARIANT ARCL1A PRO-227</scope>
</reference>
<reference key="20">
    <citation type="journal article" date="2008" name="J. Invest. Dermatol.">
        <title>A p.C217R mutation in fibulin-5 from cutis laxa patients is associated with incomplete extracellular matrix formation in a skin equivalent model.</title>
        <authorList>
            <person name="Claus S."/>
            <person name="Fischer J."/>
            <person name="Megarbane H."/>
            <person name="Megarbane A."/>
            <person name="Jobard F."/>
            <person name="Debret R."/>
            <person name="Peyrol S."/>
            <person name="Saker S."/>
            <person name="Devillers M."/>
            <person name="Sommer P."/>
            <person name="Damour O."/>
        </authorList>
    </citation>
    <scope>VARIANT ARCL1A ARG-217</scope>
    <scope>CHARACTERIZATION OF VARIANT ARCL1A ARG-217</scope>
    <scope>FUNCTION</scope>
</reference>
<reference key="21">
    <citation type="journal article" date="2009" name="J. Invest. Dermatol.">
        <title>An autosomal-recessive form of cutis laxa is due to homozygous elastin mutations, and the phenotype may be modified by a heterozygous fibulin 5 polymorphism.</title>
        <authorList>
            <person name="Megarbane H."/>
            <person name="Florence J."/>
            <person name="Sass J.O."/>
            <person name="Schwonbeck S."/>
            <person name="Foglio M."/>
            <person name="de Cid R."/>
            <person name="Cure S."/>
            <person name="Saker S."/>
            <person name="Megarbane A."/>
            <person name="Fischer J."/>
        </authorList>
    </citation>
    <scope>VARIANT MET-301</scope>
</reference>
<reference key="22">
    <citation type="journal article" date="2010" name="Invest. Ophthalmol. Vis. Sci.">
        <title>Structural effects of fibulin 5 missense mutations associated with age-related macular degeneration and cutis laxa.</title>
        <authorList>
            <person name="Jones R.P."/>
            <person name="Ridley C."/>
            <person name="Jowitt T.A."/>
            <person name="Wang M.C."/>
            <person name="Howard M."/>
            <person name="Bobola N."/>
            <person name="Wang T."/>
            <person name="Bishop P.N."/>
            <person name="Kielty C.M."/>
            <person name="Baldock C."/>
            <person name="Lotery A.J."/>
            <person name="Trump D."/>
        </authorList>
    </citation>
    <scope>CHARACTERIZATION OF VARIANTS MET-126 AND ARG-202</scope>
    <scope>CHARACTERIZATION OF VARIANTS ARMD3 LEU-60; GLN-71; SER-87; PRO-124; THR-169; SER-267; TRP-351 AND GLU-412</scope>
    <scope>CHARACTERIZATION OF VARIANTS ARCL1A ARG-217 AND PRO-227</scope>
    <scope>SUBUNIT</scope>
</reference>
<reference key="23">
    <citation type="journal article" date="2010" name="J. Mol. Biol.">
        <title>Biophysical characterisation of fibulin-5 proteins associated with disease.</title>
        <authorList>
            <person name="Schneider R."/>
            <person name="Jensen S.A."/>
            <person name="Whiteman P."/>
            <person name="McCullagh J.S."/>
            <person name="Redfield C."/>
            <person name="Handford P.A."/>
        </authorList>
    </citation>
    <scope>CHARACTERIZATION OF VARIANTS ARCL1A PRO-227 AND SER-267</scope>
    <scope>CHARACTERIZATION OF VARIANT ARMD3 THR-169</scope>
    <scope>CHARACTERIZATION OF VARIANT ARG-202</scope>
    <scope>SUBCELLULAR LOCATION</scope>
</reference>
<reference key="24">
    <citation type="journal article" date="2011" name="Brain">
        <title>Fibulin-5 mutations link inherited neuropathies, age-related macular degeneration and hyperelastic skin.</title>
        <authorList>
            <person name="Auer-Grumbach M."/>
            <person name="Weger M."/>
            <person name="Fink-Puches R."/>
            <person name="Papic L."/>
            <person name="Froehlich E."/>
            <person name="Auer-Grumbach P."/>
            <person name="El Shabrawi-Caelen L."/>
            <person name="Schabhuettl M."/>
            <person name="Windpassinger C."/>
            <person name="Senderek J."/>
            <person name="Budka H."/>
            <person name="Trajanoski S."/>
            <person name="Janecke A.R."/>
            <person name="Haas A."/>
            <person name="Metze D."/>
            <person name="Pieber T.R."/>
            <person name="Guelly C."/>
        </authorList>
    </citation>
    <scope>VARIANTS CMT1H ILE-48; SER-90; SER-267 AND CYS-373</scope>
    <scope>VARIANT MET-126</scope>
</reference>
<reference key="25">
    <citation type="journal article" date="2013" name="Brain">
        <title>Czech family confirms the link between FBLN5 and Charcot-Marie-Tooth type 1 neuropathy.</title>
        <authorList>
            <person name="Safka Brozkova D."/>
            <person name="Lassuthova P."/>
            <person name="Neupauerova J."/>
            <person name="Krutova M."/>
            <person name="Haberlova J."/>
            <person name="Stejskal D."/>
            <person name="Seeman P."/>
        </authorList>
    </citation>
    <scope>VARIANT CMT1H CYS-373</scope>
</reference>
<accession>Q9UBX5</accession>
<accession>O75966</accession>
<accession>Q6IAL4</accession>
<accession>Q6UWA3</accession>